<accession>Q8FD52</accession>
<proteinExistence type="inferred from homology"/>
<sequence length="156" mass="17009">MRSSAKQEELVKAFKALLKEEKFSSQGEIVAALQEQGFDNINQSKVSRMLTKFGAVRTRNAKMEMVYCLPAELGVPTTSSPLKNLVLDIDYNDAVVVIHTSPGAAQLIARLLDSLGKAEGILGTIAGDDTIFTTPANGFTVKELYEAILELFDQEL</sequence>
<keyword id="KW-0028">Amino-acid biosynthesis</keyword>
<keyword id="KW-0055">Arginine biosynthesis</keyword>
<keyword id="KW-0963">Cytoplasm</keyword>
<keyword id="KW-0238">DNA-binding</keyword>
<keyword id="KW-1185">Reference proteome</keyword>
<keyword id="KW-0678">Repressor</keyword>
<keyword id="KW-0804">Transcription</keyword>
<keyword id="KW-0805">Transcription regulation</keyword>
<comment type="function">
    <text evidence="2">Regulates arginine biosynthesis genes.</text>
</comment>
<comment type="pathway">
    <text>Amino-acid biosynthesis; L-arginine biosynthesis [regulation].</text>
</comment>
<comment type="subunit">
    <text evidence="1">Homohexamer.</text>
</comment>
<comment type="subcellular location">
    <subcellularLocation>
        <location evidence="2">Cytoplasm</location>
    </subcellularLocation>
</comment>
<comment type="similarity">
    <text evidence="2">Belongs to the ArgR family.</text>
</comment>
<reference key="1">
    <citation type="journal article" date="2002" name="Proc. Natl. Acad. Sci. U.S.A.">
        <title>Extensive mosaic structure revealed by the complete genome sequence of uropathogenic Escherichia coli.</title>
        <authorList>
            <person name="Welch R.A."/>
            <person name="Burland V."/>
            <person name="Plunkett G. III"/>
            <person name="Redford P."/>
            <person name="Roesch P."/>
            <person name="Rasko D."/>
            <person name="Buckles E.L."/>
            <person name="Liou S.-R."/>
            <person name="Boutin A."/>
            <person name="Hackett J."/>
            <person name="Stroud D."/>
            <person name="Mayhew G.F."/>
            <person name="Rose D.J."/>
            <person name="Zhou S."/>
            <person name="Schwartz D.C."/>
            <person name="Perna N.T."/>
            <person name="Mobley H.L.T."/>
            <person name="Donnenberg M.S."/>
            <person name="Blattner F.R."/>
        </authorList>
    </citation>
    <scope>NUCLEOTIDE SEQUENCE [LARGE SCALE GENOMIC DNA]</scope>
    <source>
        <strain>CFT073 / ATCC 700928 / UPEC</strain>
    </source>
</reference>
<gene>
    <name evidence="2" type="primary">argR</name>
    <name type="ordered locus">c3992</name>
</gene>
<evidence type="ECO:0000250" key="1"/>
<evidence type="ECO:0000255" key="2">
    <source>
        <dbReference type="HAMAP-Rule" id="MF_00173"/>
    </source>
</evidence>
<dbReference type="EMBL" id="AE014075">
    <property type="protein sequence ID" value="AAN82432.1"/>
    <property type="molecule type" value="Genomic_DNA"/>
</dbReference>
<dbReference type="RefSeq" id="WP_001257847.1">
    <property type="nucleotide sequence ID" value="NZ_CP051263.1"/>
</dbReference>
<dbReference type="SMR" id="Q8FD52"/>
<dbReference type="STRING" id="199310.c3992"/>
<dbReference type="KEGG" id="ecc:c3992"/>
<dbReference type="eggNOG" id="COG1438">
    <property type="taxonomic scope" value="Bacteria"/>
</dbReference>
<dbReference type="HOGENOM" id="CLU_097103_2_0_6"/>
<dbReference type="BioCyc" id="ECOL199310:C3992-MONOMER"/>
<dbReference type="UniPathway" id="UPA00068"/>
<dbReference type="Proteomes" id="UP000001410">
    <property type="component" value="Chromosome"/>
</dbReference>
<dbReference type="GO" id="GO:0005737">
    <property type="term" value="C:cytoplasm"/>
    <property type="evidence" value="ECO:0007669"/>
    <property type="project" value="UniProtKB-SubCell"/>
</dbReference>
<dbReference type="GO" id="GO:0034618">
    <property type="term" value="F:arginine binding"/>
    <property type="evidence" value="ECO:0007669"/>
    <property type="project" value="InterPro"/>
</dbReference>
<dbReference type="GO" id="GO:0003677">
    <property type="term" value="F:DNA binding"/>
    <property type="evidence" value="ECO:0007669"/>
    <property type="project" value="UniProtKB-KW"/>
</dbReference>
<dbReference type="GO" id="GO:0003700">
    <property type="term" value="F:DNA-binding transcription factor activity"/>
    <property type="evidence" value="ECO:0007669"/>
    <property type="project" value="UniProtKB-UniRule"/>
</dbReference>
<dbReference type="GO" id="GO:0006526">
    <property type="term" value="P:L-arginine biosynthetic process"/>
    <property type="evidence" value="ECO:0007669"/>
    <property type="project" value="UniProtKB-UniPathway"/>
</dbReference>
<dbReference type="GO" id="GO:0051259">
    <property type="term" value="P:protein complex oligomerization"/>
    <property type="evidence" value="ECO:0007669"/>
    <property type="project" value="InterPro"/>
</dbReference>
<dbReference type="GO" id="GO:1900079">
    <property type="term" value="P:regulation of arginine biosynthetic process"/>
    <property type="evidence" value="ECO:0007669"/>
    <property type="project" value="UniProtKB-UniRule"/>
</dbReference>
<dbReference type="FunFam" id="1.10.10.10:FF:000074">
    <property type="entry name" value="Arginine repressor"/>
    <property type="match status" value="1"/>
</dbReference>
<dbReference type="FunFam" id="3.30.1360.40:FF:000004">
    <property type="entry name" value="Arginine repressor"/>
    <property type="match status" value="1"/>
</dbReference>
<dbReference type="Gene3D" id="3.30.1360.40">
    <property type="match status" value="1"/>
</dbReference>
<dbReference type="Gene3D" id="1.10.10.10">
    <property type="entry name" value="Winged helix-like DNA-binding domain superfamily/Winged helix DNA-binding domain"/>
    <property type="match status" value="1"/>
</dbReference>
<dbReference type="HAMAP" id="MF_00173">
    <property type="entry name" value="Arg_repressor"/>
    <property type="match status" value="1"/>
</dbReference>
<dbReference type="InterPro" id="IPR001669">
    <property type="entry name" value="Arg_repress"/>
</dbReference>
<dbReference type="InterPro" id="IPR020899">
    <property type="entry name" value="Arg_repress_C"/>
</dbReference>
<dbReference type="InterPro" id="IPR036251">
    <property type="entry name" value="Arg_repress_C_sf"/>
</dbReference>
<dbReference type="InterPro" id="IPR020900">
    <property type="entry name" value="Arg_repress_DNA-bd"/>
</dbReference>
<dbReference type="InterPro" id="IPR036388">
    <property type="entry name" value="WH-like_DNA-bd_sf"/>
</dbReference>
<dbReference type="InterPro" id="IPR036390">
    <property type="entry name" value="WH_DNA-bd_sf"/>
</dbReference>
<dbReference type="NCBIfam" id="TIGR01529">
    <property type="entry name" value="argR_whole"/>
    <property type="match status" value="1"/>
</dbReference>
<dbReference type="NCBIfam" id="NF003457">
    <property type="entry name" value="PRK05066.1"/>
    <property type="match status" value="1"/>
</dbReference>
<dbReference type="PANTHER" id="PTHR34471">
    <property type="entry name" value="ARGININE REPRESSOR"/>
    <property type="match status" value="1"/>
</dbReference>
<dbReference type="PANTHER" id="PTHR34471:SF1">
    <property type="entry name" value="ARGININE REPRESSOR"/>
    <property type="match status" value="1"/>
</dbReference>
<dbReference type="Pfam" id="PF01316">
    <property type="entry name" value="Arg_repressor"/>
    <property type="match status" value="1"/>
</dbReference>
<dbReference type="Pfam" id="PF02863">
    <property type="entry name" value="Arg_repressor_C"/>
    <property type="match status" value="1"/>
</dbReference>
<dbReference type="PRINTS" id="PR01467">
    <property type="entry name" value="ARGREPRESSOR"/>
</dbReference>
<dbReference type="SUPFAM" id="SSF55252">
    <property type="entry name" value="C-terminal domain of arginine repressor"/>
    <property type="match status" value="1"/>
</dbReference>
<dbReference type="SUPFAM" id="SSF46785">
    <property type="entry name" value="Winged helix' DNA-binding domain"/>
    <property type="match status" value="1"/>
</dbReference>
<protein>
    <recommendedName>
        <fullName evidence="2">Arginine repressor</fullName>
    </recommendedName>
</protein>
<organism>
    <name type="scientific">Escherichia coli O6:H1 (strain CFT073 / ATCC 700928 / UPEC)</name>
    <dbReference type="NCBI Taxonomy" id="199310"/>
    <lineage>
        <taxon>Bacteria</taxon>
        <taxon>Pseudomonadati</taxon>
        <taxon>Pseudomonadota</taxon>
        <taxon>Gammaproteobacteria</taxon>
        <taxon>Enterobacterales</taxon>
        <taxon>Enterobacteriaceae</taxon>
        <taxon>Escherichia</taxon>
    </lineage>
</organism>
<name>ARGR_ECOL6</name>
<feature type="chain" id="PRO_0000205088" description="Arginine repressor">
    <location>
        <begin position="1"/>
        <end position="156"/>
    </location>
</feature>